<sequence length="231" mass="26036">MVKLVFARHGESEWNKANLFTGWADVDLSEKGTQQAIDAGKLIKEAGIEFDLAFTSVLTRAIKTTNLALENAGQLWVPTEKSWRLNERHYGALTGKNKAEAAEQFGDEQVHIWRRSYDVLPPAMAKDDEYSAHKDRRYADLDPALIPDAENLKVTLERAMPYWEEKIAPALLDGKNVFVGAHGNSIRALVKHIKGLSDDEIMDVEIPNFPPLVFELDEKLNIVKEYYLGGE</sequence>
<accession>P0DD07</accession>
<accession>P65710</accession>
<accession>Q8P0C1</accession>
<name>GPMA_STRPQ</name>
<keyword id="KW-0312">Gluconeogenesis</keyword>
<keyword id="KW-0324">Glycolysis</keyword>
<keyword id="KW-0413">Isomerase</keyword>
<dbReference type="EC" id="5.4.2.11" evidence="1"/>
<dbReference type="EMBL" id="BA000034">
    <property type="protein sequence ID" value="BAC63870.1"/>
    <property type="molecule type" value="Genomic_DNA"/>
</dbReference>
<dbReference type="RefSeq" id="WP_002983928.1">
    <property type="nucleotide sequence ID" value="NC_004606.1"/>
</dbReference>
<dbReference type="SMR" id="P0DD07"/>
<dbReference type="KEGG" id="sps:SPs0775"/>
<dbReference type="HOGENOM" id="CLU_033323_1_5_9"/>
<dbReference type="UniPathway" id="UPA00109">
    <property type="reaction ID" value="UER00186"/>
</dbReference>
<dbReference type="GO" id="GO:0004619">
    <property type="term" value="F:phosphoglycerate mutase activity"/>
    <property type="evidence" value="ECO:0007669"/>
    <property type="project" value="UniProtKB-EC"/>
</dbReference>
<dbReference type="GO" id="GO:0006094">
    <property type="term" value="P:gluconeogenesis"/>
    <property type="evidence" value="ECO:0007669"/>
    <property type="project" value="UniProtKB-UniRule"/>
</dbReference>
<dbReference type="GO" id="GO:0006096">
    <property type="term" value="P:glycolytic process"/>
    <property type="evidence" value="ECO:0007669"/>
    <property type="project" value="UniProtKB-UniRule"/>
</dbReference>
<dbReference type="CDD" id="cd07067">
    <property type="entry name" value="HP_PGM_like"/>
    <property type="match status" value="1"/>
</dbReference>
<dbReference type="FunFam" id="3.40.50.1240:FF:000003">
    <property type="entry name" value="2,3-bisphosphoglycerate-dependent phosphoglycerate mutase"/>
    <property type="match status" value="1"/>
</dbReference>
<dbReference type="Gene3D" id="3.40.50.1240">
    <property type="entry name" value="Phosphoglycerate mutase-like"/>
    <property type="match status" value="1"/>
</dbReference>
<dbReference type="HAMAP" id="MF_01039">
    <property type="entry name" value="PGAM_GpmA"/>
    <property type="match status" value="1"/>
</dbReference>
<dbReference type="InterPro" id="IPR013078">
    <property type="entry name" value="His_Pase_superF_clade-1"/>
</dbReference>
<dbReference type="InterPro" id="IPR029033">
    <property type="entry name" value="His_PPase_superfam"/>
</dbReference>
<dbReference type="InterPro" id="IPR005952">
    <property type="entry name" value="Phosphogly_mut1"/>
</dbReference>
<dbReference type="NCBIfam" id="TIGR01258">
    <property type="entry name" value="pgm_1"/>
    <property type="match status" value="1"/>
</dbReference>
<dbReference type="NCBIfam" id="NF010713">
    <property type="entry name" value="PRK14115.1"/>
    <property type="match status" value="1"/>
</dbReference>
<dbReference type="NCBIfam" id="NF010715">
    <property type="entry name" value="PRK14117.1"/>
    <property type="match status" value="1"/>
</dbReference>
<dbReference type="PANTHER" id="PTHR11931">
    <property type="entry name" value="PHOSPHOGLYCERATE MUTASE"/>
    <property type="match status" value="1"/>
</dbReference>
<dbReference type="Pfam" id="PF00300">
    <property type="entry name" value="His_Phos_1"/>
    <property type="match status" value="1"/>
</dbReference>
<dbReference type="PIRSF" id="PIRSF000709">
    <property type="entry name" value="6PFK_2-Ptase"/>
    <property type="match status" value="1"/>
</dbReference>
<dbReference type="SMART" id="SM00855">
    <property type="entry name" value="PGAM"/>
    <property type="match status" value="1"/>
</dbReference>
<dbReference type="SUPFAM" id="SSF53254">
    <property type="entry name" value="Phosphoglycerate mutase-like"/>
    <property type="match status" value="1"/>
</dbReference>
<organism>
    <name type="scientific">Streptococcus pyogenes serotype M3 (strain SSI-1)</name>
    <dbReference type="NCBI Taxonomy" id="193567"/>
    <lineage>
        <taxon>Bacteria</taxon>
        <taxon>Bacillati</taxon>
        <taxon>Bacillota</taxon>
        <taxon>Bacilli</taxon>
        <taxon>Lactobacillales</taxon>
        <taxon>Streptococcaceae</taxon>
        <taxon>Streptococcus</taxon>
    </lineage>
</organism>
<feature type="chain" id="PRO_0000411441" description="2,3-bisphosphoglycerate-dependent phosphoglycerate mutase">
    <location>
        <begin position="1"/>
        <end position="231"/>
    </location>
</feature>
<feature type="active site" description="Tele-phosphohistidine intermediate" evidence="1">
    <location>
        <position position="9"/>
    </location>
</feature>
<feature type="active site" description="Proton donor/acceptor" evidence="1">
    <location>
        <position position="87"/>
    </location>
</feature>
<feature type="binding site" evidence="1">
    <location>
        <begin position="8"/>
        <end position="15"/>
    </location>
    <ligand>
        <name>substrate</name>
    </ligand>
</feature>
<feature type="binding site" evidence="1">
    <location>
        <begin position="21"/>
        <end position="22"/>
    </location>
    <ligand>
        <name>substrate</name>
    </ligand>
</feature>
<feature type="binding site" evidence="1">
    <location>
        <position position="60"/>
    </location>
    <ligand>
        <name>substrate</name>
    </ligand>
</feature>
<feature type="binding site" evidence="1">
    <location>
        <begin position="87"/>
        <end position="90"/>
    </location>
    <ligand>
        <name>substrate</name>
    </ligand>
</feature>
<feature type="binding site" evidence="1">
    <location>
        <position position="98"/>
    </location>
    <ligand>
        <name>substrate</name>
    </ligand>
</feature>
<feature type="binding site" evidence="1">
    <location>
        <begin position="114"/>
        <end position="115"/>
    </location>
    <ligand>
        <name>substrate</name>
    </ligand>
</feature>
<feature type="binding site" evidence="1">
    <location>
        <begin position="183"/>
        <end position="184"/>
    </location>
    <ligand>
        <name>substrate</name>
    </ligand>
</feature>
<feature type="site" description="Transition state stabilizer" evidence="1">
    <location>
        <position position="182"/>
    </location>
</feature>
<evidence type="ECO:0000255" key="1">
    <source>
        <dbReference type="HAMAP-Rule" id="MF_01039"/>
    </source>
</evidence>
<reference key="1">
    <citation type="journal article" date="2003" name="Genome Res.">
        <title>Genome sequence of an M3 strain of Streptococcus pyogenes reveals a large-scale genomic rearrangement in invasive strains and new insights into phage evolution.</title>
        <authorList>
            <person name="Nakagawa I."/>
            <person name="Kurokawa K."/>
            <person name="Yamashita A."/>
            <person name="Nakata M."/>
            <person name="Tomiyasu Y."/>
            <person name="Okahashi N."/>
            <person name="Kawabata S."/>
            <person name="Yamazaki K."/>
            <person name="Shiba T."/>
            <person name="Yasunaga T."/>
            <person name="Hayashi H."/>
            <person name="Hattori M."/>
            <person name="Hamada S."/>
        </authorList>
    </citation>
    <scope>NUCLEOTIDE SEQUENCE [LARGE SCALE GENOMIC DNA]</scope>
    <source>
        <strain>SSI-1</strain>
    </source>
</reference>
<comment type="function">
    <text evidence="1">Catalyzes the interconversion of 2-phosphoglycerate and 3-phosphoglycerate.</text>
</comment>
<comment type="catalytic activity">
    <reaction evidence="1">
        <text>(2R)-2-phosphoglycerate = (2R)-3-phosphoglycerate</text>
        <dbReference type="Rhea" id="RHEA:15901"/>
        <dbReference type="ChEBI" id="CHEBI:58272"/>
        <dbReference type="ChEBI" id="CHEBI:58289"/>
        <dbReference type="EC" id="5.4.2.11"/>
    </reaction>
</comment>
<comment type="pathway">
    <text evidence="1">Carbohydrate degradation; glycolysis; pyruvate from D-glyceraldehyde 3-phosphate: step 3/5.</text>
</comment>
<comment type="similarity">
    <text evidence="1">Belongs to the phosphoglycerate mutase family. BPG-dependent PGAM subfamily.</text>
</comment>
<proteinExistence type="inferred from homology"/>
<gene>
    <name evidence="1" type="primary">gpmA</name>
    <name type="ordered locus">SPs0775</name>
</gene>
<protein>
    <recommendedName>
        <fullName evidence="1">2,3-bisphosphoglycerate-dependent phosphoglycerate mutase</fullName>
        <shortName evidence="1">BPG-dependent PGAM</shortName>
        <shortName evidence="1">PGAM</shortName>
        <shortName evidence="1">Phosphoglyceromutase</shortName>
        <shortName evidence="1">dPGM</shortName>
        <ecNumber evidence="1">5.4.2.11</ecNumber>
    </recommendedName>
</protein>